<reference key="1">
    <citation type="journal article" date="1992" name="Nucleic Acids Res.">
        <title>Nucleotide sequence of the genes encoding the three largest subunits of the DNA-dependent RNA polymerase from the archaeum Thermococcus celer.</title>
        <authorList>
            <person name="Klenk H.-P."/>
            <person name="Schwass V."/>
            <person name="Lottspeich F."/>
            <person name="Zillig W."/>
        </authorList>
    </citation>
    <scope>NUCLEOTIDE SEQUENCE [GENOMIC DNA]</scope>
    <source>
        <strain>ATCC 35543 / DSM 2476 / JCM 8558 / Vu 13</strain>
    </source>
</reference>
<protein>
    <recommendedName>
        <fullName evidence="1">DNA-directed RNA polymerase subunit Rpo1N</fullName>
        <ecNumber evidence="1">2.7.7.6</ecNumber>
    </recommendedName>
    <alternativeName>
        <fullName evidence="1">DNA-directed RNA polymerase subunit A'</fullName>
    </alternativeName>
</protein>
<name>RPO1N_THECE</name>
<organism>
    <name type="scientific">Thermococcus celer</name>
    <dbReference type="NCBI Taxonomy" id="2264"/>
    <lineage>
        <taxon>Archaea</taxon>
        <taxon>Methanobacteriati</taxon>
        <taxon>Methanobacteriota</taxon>
        <taxon>Thermococci</taxon>
        <taxon>Thermococcales</taxon>
        <taxon>Thermococcaceae</taxon>
        <taxon>Thermococcus</taxon>
    </lineage>
</organism>
<sequence>MQSIKKVIGSIDFGILSPQEIRKMSAAEITVPDTYDEDGYPIEGGLMDKRLGVIDPGLRCETCGARAGECPGHFGHVELARPVIHVGFAKTIHRVLESTCRECGRIKLTDEEIEEYFHKFEVTGNRKKAKDRLIKEIHKKAKERMVCPHCGSPQFPIKFERPTVYWELRKDEEGNEYKHRMMPSEVRDRLEKIPDRDLPLIGLDAEKARPEWMVLTVLPVPPVTMRPSITLESGIRAEDDLTHKLVDIIRINNRLKSNIEAGAPQLIIEDLWDLLQYHVTTYINNETSGIPPAKHKSGRPLKTLSQRLKGKEGRFRGNLSGKRVNFSARTVISPDPMISINEVGVPMAIAMELTVPEKVTEFNFEKLRKMVLNGPEKYPGANYVIDPEGRRIRLMENNLETVAEKLDIGWTVERHLLDGDVVLFNRQPSLHRMSIMAHRVRVMPYRTFRLNLSVCPPYNADFDGDEMNLHVPQTEEAQAEAKILMEVQNHIISPRYGGPLIAGIQDHISGGYLLTREGAYFERTEVEQMLMFAGVDVDRLPEPDKVENGVELWSGKTIFSLLLPKDLTIWYRNKLCDEPGRCEALEKLIEEKLIPDEEEVRALAYDGFTYILNGKLLSGAIDKTAYGREDGKLLDIIVREYGVERARQFLDQVTKLAIWVITHKGFTTAIDDEDLPTEALDRIREIIREAEERVNRLIEAYRNGELEPIPGKTLEETLESKIMAALAEARDNAGKVAERYLGMSNHAVIMAKTGARGKILNITQMAAMLGQQSIRGKRLYRGYRERVLTHFKPGDLGARARGFVINSYKSGLTPQEYFFHAMGGREGLVDTAVRTAQSGYMQRRLINALQDLKVEYDGTVRDPTGIIVQFRYGEDGIDPMRSWKGKTIDVNRVVLRTLLKLRGKG</sequence>
<evidence type="ECO:0000255" key="1">
    <source>
        <dbReference type="HAMAP-Rule" id="MF_00863"/>
    </source>
</evidence>
<proteinExistence type="inferred from homology"/>
<dbReference type="EC" id="2.7.7.6" evidence="1"/>
<dbReference type="EMBL" id="X67313">
    <property type="protein sequence ID" value="CAA47723.1"/>
    <property type="molecule type" value="Genomic_DNA"/>
</dbReference>
<dbReference type="PIR" id="S25564">
    <property type="entry name" value="S25564"/>
</dbReference>
<dbReference type="SMR" id="P31813"/>
<dbReference type="GO" id="GO:0005737">
    <property type="term" value="C:cytoplasm"/>
    <property type="evidence" value="ECO:0007669"/>
    <property type="project" value="UniProtKB-SubCell"/>
</dbReference>
<dbReference type="GO" id="GO:0000428">
    <property type="term" value="C:DNA-directed RNA polymerase complex"/>
    <property type="evidence" value="ECO:0007669"/>
    <property type="project" value="UniProtKB-KW"/>
</dbReference>
<dbReference type="GO" id="GO:0003677">
    <property type="term" value="F:DNA binding"/>
    <property type="evidence" value="ECO:0007669"/>
    <property type="project" value="UniProtKB-UniRule"/>
</dbReference>
<dbReference type="GO" id="GO:0003899">
    <property type="term" value="F:DNA-directed RNA polymerase activity"/>
    <property type="evidence" value="ECO:0007669"/>
    <property type="project" value="UniProtKB-UniRule"/>
</dbReference>
<dbReference type="GO" id="GO:0000287">
    <property type="term" value="F:magnesium ion binding"/>
    <property type="evidence" value="ECO:0007669"/>
    <property type="project" value="UniProtKB-UniRule"/>
</dbReference>
<dbReference type="GO" id="GO:0008270">
    <property type="term" value="F:zinc ion binding"/>
    <property type="evidence" value="ECO:0007669"/>
    <property type="project" value="UniProtKB-UniRule"/>
</dbReference>
<dbReference type="GO" id="GO:0006351">
    <property type="term" value="P:DNA-templated transcription"/>
    <property type="evidence" value="ECO:0007669"/>
    <property type="project" value="UniProtKB-UniRule"/>
</dbReference>
<dbReference type="CDD" id="cd02582">
    <property type="entry name" value="RNAP_archeal_A"/>
    <property type="match status" value="1"/>
</dbReference>
<dbReference type="FunFam" id="2.40.40.20:FF:000019">
    <property type="entry name" value="DNA-directed RNA polymerase II subunit RPB1"/>
    <property type="match status" value="1"/>
</dbReference>
<dbReference type="FunFam" id="4.10.860.120:FF:000003">
    <property type="entry name" value="DNA-directed RNA polymerase subunit"/>
    <property type="match status" value="1"/>
</dbReference>
<dbReference type="Gene3D" id="1.10.132.30">
    <property type="match status" value="1"/>
</dbReference>
<dbReference type="Gene3D" id="2.40.40.20">
    <property type="match status" value="1"/>
</dbReference>
<dbReference type="Gene3D" id="6.10.250.2940">
    <property type="match status" value="1"/>
</dbReference>
<dbReference type="Gene3D" id="6.20.50.80">
    <property type="match status" value="1"/>
</dbReference>
<dbReference type="Gene3D" id="3.30.1490.180">
    <property type="entry name" value="RNA polymerase ii"/>
    <property type="match status" value="1"/>
</dbReference>
<dbReference type="Gene3D" id="4.10.860.120">
    <property type="entry name" value="RNA polymerase II, clamp domain"/>
    <property type="match status" value="2"/>
</dbReference>
<dbReference type="Gene3D" id="1.10.274.100">
    <property type="entry name" value="RNA polymerase Rpb1, domain 3"/>
    <property type="match status" value="1"/>
</dbReference>
<dbReference type="HAMAP" id="MF_00863">
    <property type="entry name" value="RNApol_arch_Rpo1N"/>
    <property type="match status" value="1"/>
</dbReference>
<dbReference type="InterPro" id="IPR045867">
    <property type="entry name" value="DNA-dir_RpoC_beta_prime"/>
</dbReference>
<dbReference type="InterPro" id="IPR000722">
    <property type="entry name" value="RNA_pol_asu"/>
</dbReference>
<dbReference type="InterPro" id="IPR006592">
    <property type="entry name" value="RNA_pol_N"/>
</dbReference>
<dbReference type="InterPro" id="IPR007080">
    <property type="entry name" value="RNA_pol_Rpb1_1"/>
</dbReference>
<dbReference type="InterPro" id="IPR007066">
    <property type="entry name" value="RNA_pol_Rpb1_3"/>
</dbReference>
<dbReference type="InterPro" id="IPR042102">
    <property type="entry name" value="RNA_pol_Rpb1_3_sf"/>
</dbReference>
<dbReference type="InterPro" id="IPR007083">
    <property type="entry name" value="RNA_pol_Rpb1_4"/>
</dbReference>
<dbReference type="InterPro" id="IPR007081">
    <property type="entry name" value="RNA_pol_Rpb1_5"/>
</dbReference>
<dbReference type="InterPro" id="IPR044893">
    <property type="entry name" value="RNA_pol_Rpb1_clamp_domain"/>
</dbReference>
<dbReference type="InterPro" id="IPR038120">
    <property type="entry name" value="Rpb1_funnel_sf"/>
</dbReference>
<dbReference type="InterPro" id="IPR012758">
    <property type="entry name" value="RPO1N"/>
</dbReference>
<dbReference type="NCBIfam" id="NF006336">
    <property type="entry name" value="PRK08566.1"/>
    <property type="match status" value="1"/>
</dbReference>
<dbReference type="NCBIfam" id="TIGR02390">
    <property type="entry name" value="RNA_pol_rpoA1"/>
    <property type="match status" value="1"/>
</dbReference>
<dbReference type="PANTHER" id="PTHR19376">
    <property type="entry name" value="DNA-DIRECTED RNA POLYMERASE"/>
    <property type="match status" value="1"/>
</dbReference>
<dbReference type="PANTHER" id="PTHR19376:SF32">
    <property type="entry name" value="DNA-DIRECTED RNA POLYMERASE III SUBUNIT RPC1"/>
    <property type="match status" value="1"/>
</dbReference>
<dbReference type="Pfam" id="PF04997">
    <property type="entry name" value="RNA_pol_Rpb1_1"/>
    <property type="match status" value="1"/>
</dbReference>
<dbReference type="Pfam" id="PF00623">
    <property type="entry name" value="RNA_pol_Rpb1_2"/>
    <property type="match status" value="1"/>
</dbReference>
<dbReference type="Pfam" id="PF04983">
    <property type="entry name" value="RNA_pol_Rpb1_3"/>
    <property type="match status" value="1"/>
</dbReference>
<dbReference type="Pfam" id="PF05000">
    <property type="entry name" value="RNA_pol_Rpb1_4"/>
    <property type="match status" value="1"/>
</dbReference>
<dbReference type="Pfam" id="PF04998">
    <property type="entry name" value="RNA_pol_Rpb1_5"/>
    <property type="match status" value="1"/>
</dbReference>
<dbReference type="SMART" id="SM00663">
    <property type="entry name" value="RPOLA_N"/>
    <property type="match status" value="1"/>
</dbReference>
<dbReference type="SUPFAM" id="SSF64484">
    <property type="entry name" value="beta and beta-prime subunits of DNA dependent RNA-polymerase"/>
    <property type="match status" value="1"/>
</dbReference>
<gene>
    <name evidence="1" type="primary">rpo1N</name>
    <name evidence="1" type="synonym">rpoA1</name>
</gene>
<accession>P31813</accession>
<comment type="function">
    <text evidence="1">DNA-dependent RNA polymerase (RNAP) catalyzes the transcription of DNA into RNA using the four ribonucleoside triphosphates as substrates. Forms the clamp head domain.</text>
</comment>
<comment type="catalytic activity">
    <reaction evidence="1">
        <text>RNA(n) + a ribonucleoside 5'-triphosphate = RNA(n+1) + diphosphate</text>
        <dbReference type="Rhea" id="RHEA:21248"/>
        <dbReference type="Rhea" id="RHEA-COMP:14527"/>
        <dbReference type="Rhea" id="RHEA-COMP:17342"/>
        <dbReference type="ChEBI" id="CHEBI:33019"/>
        <dbReference type="ChEBI" id="CHEBI:61557"/>
        <dbReference type="ChEBI" id="CHEBI:140395"/>
        <dbReference type="EC" id="2.7.7.6"/>
    </reaction>
</comment>
<comment type="cofactor">
    <cofactor evidence="1">
        <name>Mg(2+)</name>
        <dbReference type="ChEBI" id="CHEBI:18420"/>
    </cofactor>
</comment>
<comment type="cofactor">
    <cofactor evidence="1">
        <name>Zn(2+)</name>
        <dbReference type="ChEBI" id="CHEBI:29105"/>
    </cofactor>
    <text evidence="1">Binds at least 2 Zn(2+) per subunit.</text>
</comment>
<comment type="subunit">
    <text evidence="1">Part of the RNA polymerase complex.</text>
</comment>
<comment type="subcellular location">
    <subcellularLocation>
        <location evidence="1">Cytoplasm</location>
    </subcellularLocation>
</comment>
<comment type="similarity">
    <text evidence="1">Belongs to the RNA polymerase beta' chain family.</text>
</comment>
<feature type="chain" id="PRO_0000074010" description="DNA-directed RNA polymerase subunit Rpo1N">
    <location>
        <begin position="1"/>
        <end position="905"/>
    </location>
</feature>
<feature type="binding site" evidence="1">
    <location>
        <position position="60"/>
    </location>
    <ligand>
        <name>Zn(2+)</name>
        <dbReference type="ChEBI" id="CHEBI:29105"/>
        <label>1</label>
    </ligand>
</feature>
<feature type="binding site" evidence="1">
    <location>
        <position position="63"/>
    </location>
    <ligand>
        <name>Zn(2+)</name>
        <dbReference type="ChEBI" id="CHEBI:29105"/>
        <label>1</label>
    </ligand>
</feature>
<feature type="binding site" evidence="1">
    <location>
        <position position="70"/>
    </location>
    <ligand>
        <name>Zn(2+)</name>
        <dbReference type="ChEBI" id="CHEBI:29105"/>
        <label>1</label>
    </ligand>
</feature>
<feature type="binding site" evidence="1">
    <location>
        <position position="73"/>
    </location>
    <ligand>
        <name>Zn(2+)</name>
        <dbReference type="ChEBI" id="CHEBI:29105"/>
        <label>1</label>
    </ligand>
</feature>
<feature type="binding site" evidence="1">
    <location>
        <position position="100"/>
    </location>
    <ligand>
        <name>Zn(2+)</name>
        <dbReference type="ChEBI" id="CHEBI:29105"/>
        <label>2</label>
    </ligand>
</feature>
<feature type="binding site" evidence="1">
    <location>
        <position position="103"/>
    </location>
    <ligand>
        <name>Zn(2+)</name>
        <dbReference type="ChEBI" id="CHEBI:29105"/>
        <label>2</label>
    </ligand>
</feature>
<feature type="binding site" evidence="1">
    <location>
        <position position="147"/>
    </location>
    <ligand>
        <name>Zn(2+)</name>
        <dbReference type="ChEBI" id="CHEBI:29105"/>
        <label>2</label>
    </ligand>
</feature>
<feature type="binding site" evidence="1">
    <location>
        <position position="150"/>
    </location>
    <ligand>
        <name>Zn(2+)</name>
        <dbReference type="ChEBI" id="CHEBI:29105"/>
        <label>2</label>
    </ligand>
</feature>
<feature type="binding site" evidence="1">
    <location>
        <position position="461"/>
    </location>
    <ligand>
        <name>Mg(2+)</name>
        <dbReference type="ChEBI" id="CHEBI:18420"/>
    </ligand>
</feature>
<feature type="binding site" evidence="1">
    <location>
        <position position="463"/>
    </location>
    <ligand>
        <name>Mg(2+)</name>
        <dbReference type="ChEBI" id="CHEBI:18420"/>
    </ligand>
</feature>
<feature type="binding site" evidence="1">
    <location>
        <position position="465"/>
    </location>
    <ligand>
        <name>Mg(2+)</name>
        <dbReference type="ChEBI" id="CHEBI:18420"/>
    </ligand>
</feature>
<keyword id="KW-0963">Cytoplasm</keyword>
<keyword id="KW-0238">DNA-binding</keyword>
<keyword id="KW-0240">DNA-directed RNA polymerase</keyword>
<keyword id="KW-0460">Magnesium</keyword>
<keyword id="KW-0479">Metal-binding</keyword>
<keyword id="KW-0548">Nucleotidyltransferase</keyword>
<keyword id="KW-0804">Transcription</keyword>
<keyword id="KW-0808">Transferase</keyword>
<keyword id="KW-0862">Zinc</keyword>